<reference key="1">
    <citation type="journal article" date="2008" name="DNA Res.">
        <title>Determination of the genome sequence of Porphyromonas gingivalis strain ATCC 33277 and genomic comparison with strain W83 revealed extensive genome rearrangements in P. gingivalis.</title>
        <authorList>
            <person name="Naito M."/>
            <person name="Hirakawa H."/>
            <person name="Yamashita A."/>
            <person name="Ohara N."/>
            <person name="Shoji M."/>
            <person name="Yukitake H."/>
            <person name="Nakayama K."/>
            <person name="Toh H."/>
            <person name="Yoshimura F."/>
            <person name="Kuhara S."/>
            <person name="Hattori M."/>
            <person name="Hayashi T."/>
            <person name="Nakayama K."/>
        </authorList>
    </citation>
    <scope>NUCLEOTIDE SEQUENCE [LARGE SCALE GENOMIC DNA]</scope>
    <source>
        <strain>ATCC 33277 / DSM 20709 / CIP 103683 / JCM 12257 / NCTC 11834 / 2561</strain>
    </source>
</reference>
<accession>B2RLY7</accession>
<protein>
    <recommendedName>
        <fullName evidence="1">Large ribosomal subunit protein uL22</fullName>
    </recommendedName>
    <alternativeName>
        <fullName evidence="2">50S ribosomal protein L22</fullName>
    </alternativeName>
</protein>
<name>RL22_PORG3</name>
<organism>
    <name type="scientific">Porphyromonas gingivalis (strain ATCC 33277 / DSM 20709 / CIP 103683 / JCM 12257 / NCTC 11834 / 2561)</name>
    <dbReference type="NCBI Taxonomy" id="431947"/>
    <lineage>
        <taxon>Bacteria</taxon>
        <taxon>Pseudomonadati</taxon>
        <taxon>Bacteroidota</taxon>
        <taxon>Bacteroidia</taxon>
        <taxon>Bacteroidales</taxon>
        <taxon>Porphyromonadaceae</taxon>
        <taxon>Porphyromonas</taxon>
    </lineage>
</organism>
<dbReference type="EMBL" id="AP009380">
    <property type="protein sequence ID" value="BAG34382.1"/>
    <property type="molecule type" value="Genomic_DNA"/>
</dbReference>
<dbReference type="RefSeq" id="WP_004583593.1">
    <property type="nucleotide sequence ID" value="NZ_CP025930.1"/>
</dbReference>
<dbReference type="SMR" id="B2RLY7"/>
<dbReference type="GeneID" id="57239591"/>
<dbReference type="KEGG" id="pgn:PGN_1863"/>
<dbReference type="eggNOG" id="COG0091">
    <property type="taxonomic scope" value="Bacteria"/>
</dbReference>
<dbReference type="HOGENOM" id="CLU_083987_3_1_10"/>
<dbReference type="OrthoDB" id="9805969at2"/>
<dbReference type="BioCyc" id="PGIN431947:G1G2V-2077-MONOMER"/>
<dbReference type="Proteomes" id="UP000008842">
    <property type="component" value="Chromosome"/>
</dbReference>
<dbReference type="GO" id="GO:0022625">
    <property type="term" value="C:cytosolic large ribosomal subunit"/>
    <property type="evidence" value="ECO:0007669"/>
    <property type="project" value="TreeGrafter"/>
</dbReference>
<dbReference type="GO" id="GO:0019843">
    <property type="term" value="F:rRNA binding"/>
    <property type="evidence" value="ECO:0007669"/>
    <property type="project" value="UniProtKB-UniRule"/>
</dbReference>
<dbReference type="GO" id="GO:0003735">
    <property type="term" value="F:structural constituent of ribosome"/>
    <property type="evidence" value="ECO:0007669"/>
    <property type="project" value="InterPro"/>
</dbReference>
<dbReference type="GO" id="GO:0006412">
    <property type="term" value="P:translation"/>
    <property type="evidence" value="ECO:0007669"/>
    <property type="project" value="UniProtKB-UniRule"/>
</dbReference>
<dbReference type="CDD" id="cd00336">
    <property type="entry name" value="Ribosomal_L22"/>
    <property type="match status" value="1"/>
</dbReference>
<dbReference type="Gene3D" id="3.90.470.10">
    <property type="entry name" value="Ribosomal protein L22/L17"/>
    <property type="match status" value="1"/>
</dbReference>
<dbReference type="HAMAP" id="MF_01331_B">
    <property type="entry name" value="Ribosomal_uL22_B"/>
    <property type="match status" value="1"/>
</dbReference>
<dbReference type="InterPro" id="IPR001063">
    <property type="entry name" value="Ribosomal_uL22"/>
</dbReference>
<dbReference type="InterPro" id="IPR005727">
    <property type="entry name" value="Ribosomal_uL22_bac/chlpt-type"/>
</dbReference>
<dbReference type="InterPro" id="IPR047867">
    <property type="entry name" value="Ribosomal_uL22_bac/org-type"/>
</dbReference>
<dbReference type="InterPro" id="IPR036394">
    <property type="entry name" value="Ribosomal_uL22_sf"/>
</dbReference>
<dbReference type="NCBIfam" id="TIGR01044">
    <property type="entry name" value="rplV_bact"/>
    <property type="match status" value="1"/>
</dbReference>
<dbReference type="PANTHER" id="PTHR13501">
    <property type="entry name" value="CHLOROPLAST 50S RIBOSOMAL PROTEIN L22-RELATED"/>
    <property type="match status" value="1"/>
</dbReference>
<dbReference type="PANTHER" id="PTHR13501:SF8">
    <property type="entry name" value="LARGE RIBOSOMAL SUBUNIT PROTEIN UL22M"/>
    <property type="match status" value="1"/>
</dbReference>
<dbReference type="Pfam" id="PF00237">
    <property type="entry name" value="Ribosomal_L22"/>
    <property type="match status" value="1"/>
</dbReference>
<dbReference type="SUPFAM" id="SSF54843">
    <property type="entry name" value="Ribosomal protein L22"/>
    <property type="match status" value="1"/>
</dbReference>
<sequence>MGARKHNSAEARKEALKQMYFAKLRNVPTSPRKMRLVADMIRGMEVNRALGVLKFSNKEASARVEKLLRSAVANWEEKNERKAEEGELFVSRICVDGASTLKRLRPAPQGRGYRIRKRSNHVTIYVDTLNNDNN</sequence>
<keyword id="KW-0687">Ribonucleoprotein</keyword>
<keyword id="KW-0689">Ribosomal protein</keyword>
<keyword id="KW-0694">RNA-binding</keyword>
<keyword id="KW-0699">rRNA-binding</keyword>
<evidence type="ECO:0000255" key="1">
    <source>
        <dbReference type="HAMAP-Rule" id="MF_01331"/>
    </source>
</evidence>
<evidence type="ECO:0000305" key="2"/>
<comment type="function">
    <text evidence="1">This protein binds specifically to 23S rRNA; its binding is stimulated by other ribosomal proteins, e.g. L4, L17, and L20. It is important during the early stages of 50S assembly. It makes multiple contacts with different domains of the 23S rRNA in the assembled 50S subunit and ribosome (By similarity).</text>
</comment>
<comment type="function">
    <text evidence="1">The globular domain of the protein is located near the polypeptide exit tunnel on the outside of the subunit, while an extended beta-hairpin is found that lines the wall of the exit tunnel in the center of the 70S ribosome.</text>
</comment>
<comment type="subunit">
    <text evidence="1">Part of the 50S ribosomal subunit.</text>
</comment>
<comment type="similarity">
    <text evidence="1">Belongs to the universal ribosomal protein uL22 family.</text>
</comment>
<proteinExistence type="inferred from homology"/>
<gene>
    <name evidence="1" type="primary">rplV</name>
    <name type="ordered locus">PGN_1863</name>
</gene>
<feature type="chain" id="PRO_1000142293" description="Large ribosomal subunit protein uL22">
    <location>
        <begin position="1"/>
        <end position="134"/>
    </location>
</feature>